<gene>
    <name evidence="1" type="primary">opgH</name>
    <name type="ordered locus">Pput_4899</name>
</gene>
<comment type="function">
    <text evidence="1">Involved in the biosynthesis of osmoregulated periplasmic glucans (OPGs).</text>
</comment>
<comment type="pathway">
    <text evidence="1">Glycan metabolism; osmoregulated periplasmic glucan (OPG) biosynthesis.</text>
</comment>
<comment type="subcellular location">
    <subcellularLocation>
        <location evidence="1">Cell inner membrane</location>
        <topology evidence="1">Multi-pass membrane protein</topology>
    </subcellularLocation>
</comment>
<comment type="similarity">
    <text evidence="1">Belongs to the glycosyltransferase 2 family. OpgH subfamily.</text>
</comment>
<reference key="1">
    <citation type="submission" date="2007-05" db="EMBL/GenBank/DDBJ databases">
        <title>Complete sequence of Pseudomonas putida F1.</title>
        <authorList>
            <consortium name="US DOE Joint Genome Institute"/>
            <person name="Copeland A."/>
            <person name="Lucas S."/>
            <person name="Lapidus A."/>
            <person name="Barry K."/>
            <person name="Detter J.C."/>
            <person name="Glavina del Rio T."/>
            <person name="Hammon N."/>
            <person name="Israni S."/>
            <person name="Dalin E."/>
            <person name="Tice H."/>
            <person name="Pitluck S."/>
            <person name="Chain P."/>
            <person name="Malfatti S."/>
            <person name="Shin M."/>
            <person name="Vergez L."/>
            <person name="Schmutz J."/>
            <person name="Larimer F."/>
            <person name="Land M."/>
            <person name="Hauser L."/>
            <person name="Kyrpides N."/>
            <person name="Lykidis A."/>
            <person name="Parales R."/>
            <person name="Richardson P."/>
        </authorList>
    </citation>
    <scope>NUCLEOTIDE SEQUENCE [LARGE SCALE GENOMIC DNA]</scope>
    <source>
        <strain>ATCC 700007 / DSM 6899 / JCM 31910 / BCRC 17059 / LMG 24140 / F1</strain>
    </source>
</reference>
<proteinExistence type="inferred from homology"/>
<dbReference type="EC" id="2.4.1.-" evidence="1"/>
<dbReference type="EMBL" id="CP000712">
    <property type="protein sequence ID" value="ABQ81019.1"/>
    <property type="molecule type" value="Genomic_DNA"/>
</dbReference>
<dbReference type="CAZy" id="GT2">
    <property type="family name" value="Glycosyltransferase Family 2"/>
</dbReference>
<dbReference type="KEGG" id="ppf:Pput_4899"/>
<dbReference type="eggNOG" id="COG2943">
    <property type="taxonomic scope" value="Bacteria"/>
</dbReference>
<dbReference type="HOGENOM" id="CLU_015730_1_0_6"/>
<dbReference type="UniPathway" id="UPA00637"/>
<dbReference type="GO" id="GO:0005886">
    <property type="term" value="C:plasma membrane"/>
    <property type="evidence" value="ECO:0007669"/>
    <property type="project" value="UniProtKB-SubCell"/>
</dbReference>
<dbReference type="GO" id="GO:0016758">
    <property type="term" value="F:hexosyltransferase activity"/>
    <property type="evidence" value="ECO:0007669"/>
    <property type="project" value="UniProtKB-UniRule"/>
</dbReference>
<dbReference type="GO" id="GO:0009250">
    <property type="term" value="P:glucan biosynthetic process"/>
    <property type="evidence" value="ECO:0007669"/>
    <property type="project" value="UniProtKB-UniRule"/>
</dbReference>
<dbReference type="CDD" id="cd04191">
    <property type="entry name" value="Glucan_BSP_MdoH"/>
    <property type="match status" value="1"/>
</dbReference>
<dbReference type="FunFam" id="3.90.550.10:FF:000047">
    <property type="entry name" value="Glucans biosynthesis glucosyltransferase H"/>
    <property type="match status" value="1"/>
</dbReference>
<dbReference type="Gene3D" id="3.90.550.10">
    <property type="entry name" value="Spore Coat Polysaccharide Biosynthesis Protein SpsA, Chain A"/>
    <property type="match status" value="1"/>
</dbReference>
<dbReference type="HAMAP" id="MF_01072">
    <property type="entry name" value="MdoH_OpgH"/>
    <property type="match status" value="1"/>
</dbReference>
<dbReference type="InterPro" id="IPR023725">
    <property type="entry name" value="Glucans_biosynth_gluTrFase_H"/>
</dbReference>
<dbReference type="InterPro" id="IPR001173">
    <property type="entry name" value="Glyco_trans_2-like"/>
</dbReference>
<dbReference type="InterPro" id="IPR050321">
    <property type="entry name" value="Glycosyltr_2/OpgH_subfam"/>
</dbReference>
<dbReference type="InterPro" id="IPR029044">
    <property type="entry name" value="Nucleotide-diphossugar_trans"/>
</dbReference>
<dbReference type="NCBIfam" id="NF003955">
    <property type="entry name" value="PRK05454.1-1"/>
    <property type="match status" value="1"/>
</dbReference>
<dbReference type="NCBIfam" id="NF003958">
    <property type="entry name" value="PRK05454.2-1"/>
    <property type="match status" value="1"/>
</dbReference>
<dbReference type="NCBIfam" id="NF003962">
    <property type="entry name" value="PRK05454.2-5"/>
    <property type="match status" value="1"/>
</dbReference>
<dbReference type="PANTHER" id="PTHR43867">
    <property type="entry name" value="CELLULOSE SYNTHASE CATALYTIC SUBUNIT A [UDP-FORMING]"/>
    <property type="match status" value="1"/>
</dbReference>
<dbReference type="PANTHER" id="PTHR43867:SF5">
    <property type="entry name" value="GLUCANS BIOSYNTHESIS GLUCOSYLTRANSFERASE H"/>
    <property type="match status" value="1"/>
</dbReference>
<dbReference type="Pfam" id="PF00535">
    <property type="entry name" value="Glycos_transf_2"/>
    <property type="match status" value="1"/>
</dbReference>
<dbReference type="SUPFAM" id="SSF53448">
    <property type="entry name" value="Nucleotide-diphospho-sugar transferases"/>
    <property type="match status" value="1"/>
</dbReference>
<evidence type="ECO:0000255" key="1">
    <source>
        <dbReference type="HAMAP-Rule" id="MF_01072"/>
    </source>
</evidence>
<keyword id="KW-0997">Cell inner membrane</keyword>
<keyword id="KW-1003">Cell membrane</keyword>
<keyword id="KW-0328">Glycosyltransferase</keyword>
<keyword id="KW-0472">Membrane</keyword>
<keyword id="KW-0808">Transferase</keyword>
<keyword id="KW-0812">Transmembrane</keyword>
<keyword id="KW-1133">Transmembrane helix</keyword>
<feature type="chain" id="PRO_1000064611" description="Glucans biosynthesis glucosyltransferase H">
    <location>
        <begin position="1"/>
        <end position="857"/>
    </location>
</feature>
<feature type="transmembrane region" description="Helical" evidence="1">
    <location>
        <begin position="142"/>
        <end position="162"/>
    </location>
</feature>
<feature type="transmembrane region" description="Helical" evidence="1">
    <location>
        <begin position="196"/>
        <end position="216"/>
    </location>
</feature>
<feature type="transmembrane region" description="Helical" evidence="1">
    <location>
        <begin position="515"/>
        <end position="535"/>
    </location>
</feature>
<feature type="transmembrane region" description="Helical" evidence="1">
    <location>
        <begin position="572"/>
        <end position="592"/>
    </location>
</feature>
<feature type="transmembrane region" description="Helical" evidence="1">
    <location>
        <begin position="606"/>
        <end position="626"/>
    </location>
</feature>
<feature type="transmembrane region" description="Helical" evidence="1">
    <location>
        <begin position="682"/>
        <end position="702"/>
    </location>
</feature>
<sequence>MSNSSARPESLGEYLAHLPLSDEQRAELASCTSFSELHQRLAANPAASSAEAVQASVGPRLTVGSAAELEDAEMLGVDGSGRLCLKIAPPIKRTKVVPEPWRTNVLIRMWRRMTGRPNAPQPPKRELPPARWRTVGSIRRYILLALMIGQTIVAGWYMKGILPYQGWSFVDFDEIVNQPLWDTVVQVWPYALQTSILILFGILFCWVSAGFWTALMGFLELLTGRDKYKISGSSAGNEPIAPEARTALVMPICNEDVPRVFAGLRATFESVAASGNLDRFDFFVLSDTNDTDIAVAEQQAWLDVCRETKGFGRIFYRRRRRRVKRKSGNLDDFCRRWGGEYKYMVVLDADSVMSGECLSSLVRLMEANPDAGIIQTGPKASGMDTLYARMQQFATRVYGPLFTAGLHFWQLGESHYWGHNAIIRMKPFIEHCALAPLPGKGAFAGAILSHDFVEAALMRRAGWGVWIAYDLPGSYEELPPNLLDELKRDRRWCHGNLMNFRLFLVKGMHPVHRAVFLTGVMSYLSAPLWFLFLVLSTALLATNTLMEPQYFIEPYQLYPLWPQWHPEKAVALFSTTIVLLFLPKLLSVILIWAKGAVEYGGRVKVTLSMLMEMLFSMLLAPVRMIFHTRFVLAAFLGWAATWNSPQRDDDSTPWGEAVRRHGPQTLLGVAWAALVAWLNPSFLWWLAPIVGSLVLSIPVSVISSRTRLGLAAKDEKLFLIPEEYATPQELLATDQYTHENRWHALHDGFVRAVVDPRQNALACAMATARHGQAAPIEALRAERVAKAIEVGPKGLDLNTRLALLSDPVALSRLHEQVWAEHNAAWIDVWRASINNDPHSPLLPLHPENAGQPALVGA</sequence>
<accession>A5WA59</accession>
<protein>
    <recommendedName>
        <fullName evidence="1">Glucans biosynthesis glucosyltransferase H</fullName>
        <ecNumber evidence="1">2.4.1.-</ecNumber>
    </recommendedName>
</protein>
<organism>
    <name type="scientific">Pseudomonas putida (strain ATCC 700007 / DSM 6899 / JCM 31910 / BCRC 17059 / LMG 24140 / F1)</name>
    <dbReference type="NCBI Taxonomy" id="351746"/>
    <lineage>
        <taxon>Bacteria</taxon>
        <taxon>Pseudomonadati</taxon>
        <taxon>Pseudomonadota</taxon>
        <taxon>Gammaproteobacteria</taxon>
        <taxon>Pseudomonadales</taxon>
        <taxon>Pseudomonadaceae</taxon>
        <taxon>Pseudomonas</taxon>
    </lineage>
</organism>
<name>OPGH_PSEP1</name>